<dbReference type="EC" id="2.3.1.74"/>
<dbReference type="EMBL" id="X60205">
    <property type="protein sequence ID" value="CAA42764.1"/>
    <property type="molecule type" value="Genomic_DNA"/>
</dbReference>
<dbReference type="PIR" id="S16598">
    <property type="entry name" value="SYZMCC"/>
</dbReference>
<dbReference type="RefSeq" id="NP_001142246.1">
    <property type="nucleotide sequence ID" value="NM_001148774.1"/>
</dbReference>
<dbReference type="SMR" id="P24825"/>
<dbReference type="FunCoup" id="P24825">
    <property type="interactions" value="59"/>
</dbReference>
<dbReference type="STRING" id="4577.P24825"/>
<dbReference type="PaxDb" id="4577-GRMZM2G151227_P01"/>
<dbReference type="GeneID" id="100274415"/>
<dbReference type="KEGG" id="zma:100274415"/>
<dbReference type="MaizeGDB" id="13853"/>
<dbReference type="eggNOG" id="ENOG502QRSY">
    <property type="taxonomic scope" value="Eukaryota"/>
</dbReference>
<dbReference type="HOGENOM" id="CLU_034992_2_0_1"/>
<dbReference type="InParanoid" id="P24825"/>
<dbReference type="OrthoDB" id="1529441at2759"/>
<dbReference type="UniPathway" id="UPA00154"/>
<dbReference type="Proteomes" id="UP000007305">
    <property type="component" value="Unplaced"/>
</dbReference>
<dbReference type="GO" id="GO:0016747">
    <property type="term" value="F:acyltransferase activity, transferring groups other than amino-acyl groups"/>
    <property type="evidence" value="ECO:0000318"/>
    <property type="project" value="GO_Central"/>
</dbReference>
<dbReference type="GO" id="GO:0016210">
    <property type="term" value="F:naringenin-chalcone synthase activity"/>
    <property type="evidence" value="ECO:0007669"/>
    <property type="project" value="UniProtKB-EC"/>
</dbReference>
<dbReference type="GO" id="GO:0009813">
    <property type="term" value="P:flavonoid biosynthetic process"/>
    <property type="evidence" value="ECO:0007669"/>
    <property type="project" value="UniProtKB-UniPathway"/>
</dbReference>
<dbReference type="GO" id="GO:0030639">
    <property type="term" value="P:polyketide biosynthetic process"/>
    <property type="evidence" value="ECO:0000318"/>
    <property type="project" value="GO_Central"/>
</dbReference>
<dbReference type="CDD" id="cd00831">
    <property type="entry name" value="CHS_like"/>
    <property type="match status" value="1"/>
</dbReference>
<dbReference type="FunFam" id="3.40.47.10:FF:000014">
    <property type="entry name" value="Chalcone synthase 1"/>
    <property type="match status" value="1"/>
</dbReference>
<dbReference type="FunFam" id="3.40.47.10:FF:000025">
    <property type="entry name" value="Chalcone synthase 2"/>
    <property type="match status" value="1"/>
</dbReference>
<dbReference type="Gene3D" id="3.40.47.10">
    <property type="match status" value="2"/>
</dbReference>
<dbReference type="InterPro" id="IPR012328">
    <property type="entry name" value="Chalcone/stilbene_synt_C"/>
</dbReference>
<dbReference type="InterPro" id="IPR001099">
    <property type="entry name" value="Chalcone/stilbene_synt_N"/>
</dbReference>
<dbReference type="InterPro" id="IPR018088">
    <property type="entry name" value="Chalcone/stilbene_synthase_AS"/>
</dbReference>
<dbReference type="InterPro" id="IPR011141">
    <property type="entry name" value="Polyketide_synthase_type-III"/>
</dbReference>
<dbReference type="InterPro" id="IPR016039">
    <property type="entry name" value="Thiolase-like"/>
</dbReference>
<dbReference type="PANTHER" id="PTHR11877:SF14">
    <property type="entry name" value="CHALCONE SYNTHASE"/>
    <property type="match status" value="1"/>
</dbReference>
<dbReference type="PANTHER" id="PTHR11877">
    <property type="entry name" value="HYDROXYMETHYLGLUTARYL-COA SYNTHASE"/>
    <property type="match status" value="1"/>
</dbReference>
<dbReference type="Pfam" id="PF02797">
    <property type="entry name" value="Chal_sti_synt_C"/>
    <property type="match status" value="1"/>
</dbReference>
<dbReference type="Pfam" id="PF00195">
    <property type="entry name" value="Chal_sti_synt_N"/>
    <property type="match status" value="1"/>
</dbReference>
<dbReference type="PIRSF" id="PIRSF000451">
    <property type="entry name" value="PKS_III"/>
    <property type="match status" value="1"/>
</dbReference>
<dbReference type="SUPFAM" id="SSF53901">
    <property type="entry name" value="Thiolase-like"/>
    <property type="match status" value="2"/>
</dbReference>
<dbReference type="PROSITE" id="PS00441">
    <property type="entry name" value="CHALCONE_SYNTH"/>
    <property type="match status" value="1"/>
</dbReference>
<evidence type="ECO:0000255" key="1">
    <source>
        <dbReference type="PROSITE-ProRule" id="PRU10023"/>
    </source>
</evidence>
<evidence type="ECO:0000305" key="2"/>
<reference key="1">
    <citation type="journal article" date="1991" name="EMBO J.">
        <title>The duplicated chalcone synthase genes C2 and Whp (white pollen) of Zea mays are independently regulated; evidence for translational control of Whp expression by the anthocyanin intensifying gene in.</title>
        <authorList>
            <person name="Franken P."/>
            <person name="Niesbach-Kloesgen U."/>
            <person name="Weydemann U."/>
            <person name="Marechal-Drouard L."/>
            <person name="Saedler H."/>
            <person name="Wienand U."/>
        </authorList>
    </citation>
    <scope>NUCLEOTIDE SEQUENCE [GENOMIC DNA]</scope>
    <source>
        <strain>cv. Line C1-P</strain>
        <tissue>Leaf</tissue>
    </source>
</reference>
<comment type="function">
    <text>The primary product of this enzyme is 4,2',4',6'-tetrahydroxychalcone (also termed naringenin-chalcone or chalcone) which can under specific conditions spontaneously isomerize into naringenin.</text>
</comment>
<comment type="catalytic activity">
    <reaction evidence="1">
        <text>(E)-4-coumaroyl-CoA + 3 malonyl-CoA + 3 H(+) = 2',4,4',6'-tetrahydroxychalcone + 3 CO2 + 4 CoA</text>
        <dbReference type="Rhea" id="RHEA:11128"/>
        <dbReference type="ChEBI" id="CHEBI:15378"/>
        <dbReference type="ChEBI" id="CHEBI:15413"/>
        <dbReference type="ChEBI" id="CHEBI:16526"/>
        <dbReference type="ChEBI" id="CHEBI:57287"/>
        <dbReference type="ChEBI" id="CHEBI:57384"/>
        <dbReference type="ChEBI" id="CHEBI:85008"/>
        <dbReference type="EC" id="2.3.1.74"/>
    </reaction>
</comment>
<comment type="pathway">
    <text>Secondary metabolite biosynthesis; flavonoid biosynthesis.</text>
</comment>
<comment type="similarity">
    <text evidence="2">Belongs to the thiolase-like superfamily. Chalcone/stilbene synthases family.</text>
</comment>
<feature type="chain" id="PRO_0000216004" description="Chalcone synthase C2">
    <location>
        <begin position="1"/>
        <end position="400"/>
    </location>
</feature>
<feature type="active site" evidence="1">
    <location>
        <position position="168"/>
    </location>
</feature>
<name>CHS2_MAIZE</name>
<organism>
    <name type="scientific">Zea mays</name>
    <name type="common">Maize</name>
    <dbReference type="NCBI Taxonomy" id="4577"/>
    <lineage>
        <taxon>Eukaryota</taxon>
        <taxon>Viridiplantae</taxon>
        <taxon>Streptophyta</taxon>
        <taxon>Embryophyta</taxon>
        <taxon>Tracheophyta</taxon>
        <taxon>Spermatophyta</taxon>
        <taxon>Magnoliopsida</taxon>
        <taxon>Liliopsida</taxon>
        <taxon>Poales</taxon>
        <taxon>Poaceae</taxon>
        <taxon>PACMAD clade</taxon>
        <taxon>Panicoideae</taxon>
        <taxon>Andropogonodae</taxon>
        <taxon>Andropogoneae</taxon>
        <taxon>Tripsacinae</taxon>
        <taxon>Zea</taxon>
    </lineage>
</organism>
<accession>P24825</accession>
<proteinExistence type="inferred from homology"/>
<protein>
    <recommendedName>
        <fullName>Chalcone synthase C2</fullName>
        <ecNumber>2.3.1.74</ecNumber>
    </recommendedName>
    <alternativeName>
        <fullName>Naringenin-chalcone synthase C2</fullName>
    </alternativeName>
</protein>
<sequence length="400" mass="43196">MAGATVTVEEVRKAQRATGPATVLAIGTATPANCVYQADYPDYYFRITKSEHLTDLKEKFKRMCDKSMIRKRYMHLTEEFLAENPSMCAYMAPSLDARQDVVVVEVPKLGKAAAQKAIKEWGQPKSRITHLVFCTTSGVDMPGADYQLTKALGLRPSVNRLMMYQQGCFAGGTVLRVAKDLAENNRGARVLVVCSEITAVTFRGPSESHLDSLVGQALFGDGAAAVVVGADPDDRVERPLFQLVSAAQTILPDSEGAIDGHLREVGLTFHLLKDVPGLISKNIGRALDDAFKPLGISDWNSIFWVAHPGGPAILDQVEAKVGLDKARMRATRHVLSEYGNMSSACVLFILDEMRKRSAEDGQATTGEGLDWGVLFGFGPGLTVETVVLHSVPITTGAATA</sequence>
<keyword id="KW-0012">Acyltransferase</keyword>
<keyword id="KW-0284">Flavonoid biosynthesis</keyword>
<keyword id="KW-1185">Reference proteome</keyword>
<keyword id="KW-0808">Transferase</keyword>
<gene>
    <name type="primary">C2</name>
</gene>